<organism>
    <name type="scientific">Heliobacterium modesticaldum (strain ATCC 51547 / Ice1)</name>
    <dbReference type="NCBI Taxonomy" id="498761"/>
    <lineage>
        <taxon>Bacteria</taxon>
        <taxon>Bacillati</taxon>
        <taxon>Bacillota</taxon>
        <taxon>Clostridia</taxon>
        <taxon>Eubacteriales</taxon>
        <taxon>Heliobacteriaceae</taxon>
        <taxon>Heliomicrobium</taxon>
    </lineage>
</organism>
<evidence type="ECO:0000255" key="1">
    <source>
        <dbReference type="HAMAP-Rule" id="MF_00385"/>
    </source>
</evidence>
<evidence type="ECO:0000305" key="2"/>
<protein>
    <recommendedName>
        <fullName evidence="1">Small ribosomal subunit protein bS16</fullName>
    </recommendedName>
    <alternativeName>
        <fullName evidence="2">30S ribosomal protein S16</fullName>
    </alternativeName>
</protein>
<name>RS16_HELMI</name>
<accession>B0TH64</accession>
<proteinExistence type="inferred from homology"/>
<reference key="1">
    <citation type="journal article" date="2008" name="J. Bacteriol.">
        <title>The genome of Heliobacterium modesticaldum, a phototrophic representative of the Firmicutes containing the simplest photosynthetic apparatus.</title>
        <authorList>
            <person name="Sattley W.M."/>
            <person name="Madigan M.T."/>
            <person name="Swingley W.D."/>
            <person name="Cheung P.C."/>
            <person name="Clocksin K.M."/>
            <person name="Conrad A.L."/>
            <person name="Dejesa L.C."/>
            <person name="Honchak B.M."/>
            <person name="Jung D.O."/>
            <person name="Karbach L.E."/>
            <person name="Kurdoglu A."/>
            <person name="Lahiri S."/>
            <person name="Mastrian S.D."/>
            <person name="Page L.E."/>
            <person name="Taylor H.L."/>
            <person name="Wang Z.T."/>
            <person name="Raymond J."/>
            <person name="Chen M."/>
            <person name="Blankenship R.E."/>
            <person name="Touchman J.W."/>
        </authorList>
    </citation>
    <scope>NUCLEOTIDE SEQUENCE [LARGE SCALE GENOMIC DNA]</scope>
    <source>
        <strain>ATCC 51547 / Ice1</strain>
    </source>
</reference>
<feature type="chain" id="PRO_1000196418" description="Small ribosomal subunit protein bS16">
    <location>
        <begin position="1"/>
        <end position="90"/>
    </location>
</feature>
<gene>
    <name evidence="1" type="primary">rpsP</name>
    <name type="ordered locus">Helmi_21140</name>
    <name type="ORF">HM1_2183</name>
</gene>
<dbReference type="EMBL" id="CP000930">
    <property type="protein sequence ID" value="ABZ84739.1"/>
    <property type="molecule type" value="Genomic_DNA"/>
</dbReference>
<dbReference type="RefSeq" id="WP_012283239.1">
    <property type="nucleotide sequence ID" value="NC_010337.2"/>
</dbReference>
<dbReference type="SMR" id="B0TH64"/>
<dbReference type="STRING" id="498761.HM1_2183"/>
<dbReference type="KEGG" id="hmo:HM1_2183"/>
<dbReference type="eggNOG" id="COG0228">
    <property type="taxonomic scope" value="Bacteria"/>
</dbReference>
<dbReference type="HOGENOM" id="CLU_100590_5_0_9"/>
<dbReference type="OrthoDB" id="9807878at2"/>
<dbReference type="Proteomes" id="UP000008550">
    <property type="component" value="Chromosome"/>
</dbReference>
<dbReference type="GO" id="GO:0005737">
    <property type="term" value="C:cytoplasm"/>
    <property type="evidence" value="ECO:0007669"/>
    <property type="project" value="UniProtKB-ARBA"/>
</dbReference>
<dbReference type="GO" id="GO:0015935">
    <property type="term" value="C:small ribosomal subunit"/>
    <property type="evidence" value="ECO:0007669"/>
    <property type="project" value="TreeGrafter"/>
</dbReference>
<dbReference type="GO" id="GO:0003735">
    <property type="term" value="F:structural constituent of ribosome"/>
    <property type="evidence" value="ECO:0007669"/>
    <property type="project" value="InterPro"/>
</dbReference>
<dbReference type="GO" id="GO:0006412">
    <property type="term" value="P:translation"/>
    <property type="evidence" value="ECO:0007669"/>
    <property type="project" value="UniProtKB-UniRule"/>
</dbReference>
<dbReference type="FunFam" id="3.30.1320.10:FF:000002">
    <property type="entry name" value="30S ribosomal protein S16"/>
    <property type="match status" value="1"/>
</dbReference>
<dbReference type="Gene3D" id="3.30.1320.10">
    <property type="match status" value="1"/>
</dbReference>
<dbReference type="HAMAP" id="MF_00385">
    <property type="entry name" value="Ribosomal_bS16"/>
    <property type="match status" value="1"/>
</dbReference>
<dbReference type="InterPro" id="IPR000307">
    <property type="entry name" value="Ribosomal_bS16"/>
</dbReference>
<dbReference type="InterPro" id="IPR023803">
    <property type="entry name" value="Ribosomal_bS16_dom_sf"/>
</dbReference>
<dbReference type="NCBIfam" id="TIGR00002">
    <property type="entry name" value="S16"/>
    <property type="match status" value="1"/>
</dbReference>
<dbReference type="PANTHER" id="PTHR12919">
    <property type="entry name" value="30S RIBOSOMAL PROTEIN S16"/>
    <property type="match status" value="1"/>
</dbReference>
<dbReference type="PANTHER" id="PTHR12919:SF20">
    <property type="entry name" value="SMALL RIBOSOMAL SUBUNIT PROTEIN BS16M"/>
    <property type="match status" value="1"/>
</dbReference>
<dbReference type="Pfam" id="PF00886">
    <property type="entry name" value="Ribosomal_S16"/>
    <property type="match status" value="1"/>
</dbReference>
<dbReference type="SUPFAM" id="SSF54565">
    <property type="entry name" value="Ribosomal protein S16"/>
    <property type="match status" value="1"/>
</dbReference>
<sequence length="90" mass="10120">MATRIRLKRLGMKKAPFYRVVVADSRSPRDGRFIEEIGYYNPTKEPAILQIDEEKAIKWLSSGAQPSDTVKALLNKAGILDKMAEKKAQA</sequence>
<keyword id="KW-1185">Reference proteome</keyword>
<keyword id="KW-0687">Ribonucleoprotein</keyword>
<keyword id="KW-0689">Ribosomal protein</keyword>
<comment type="similarity">
    <text evidence="1">Belongs to the bacterial ribosomal protein bS16 family.</text>
</comment>